<comment type="function">
    <text evidence="5 6 7 10">Synthesizes cyclic GMP (cGMP) from GTP, after activation by heterotrimeric or monomeric G proteins (PubMed:11237875, PubMed:11522784, PubMed:11777934). Involved in chemotaxis (PubMed:11777934).</text>
</comment>
<comment type="catalytic activity">
    <reaction evidence="5 6 7">
        <text>GTP = 3',5'-cyclic GMP + diphosphate</text>
        <dbReference type="Rhea" id="RHEA:13665"/>
        <dbReference type="ChEBI" id="CHEBI:33019"/>
        <dbReference type="ChEBI" id="CHEBI:37565"/>
        <dbReference type="ChEBI" id="CHEBI:57746"/>
        <dbReference type="EC" id="4.6.1.2"/>
    </reaction>
    <physiologicalReaction direction="left-to-right" evidence="5 6 7">
        <dbReference type="Rhea" id="RHEA:13666"/>
    </physiologicalReaction>
</comment>
<comment type="cofactor">
    <cofactor evidence="7">
        <name>Mg(2+)</name>
        <dbReference type="ChEBI" id="CHEBI:18420"/>
    </cofactor>
    <text evidence="1">Binds 2 magnesium ions per subunit.</text>
</comment>
<comment type="activity regulation">
    <text evidence="6 7">Activated by guanosine 5'-3-O-(thio)triphosphate (GTPgammaS) (PubMed:11522784, PubMed:11777934). Inhibited by calcium (PubMed:11777934).</text>
</comment>
<comment type="biophysicochemical properties">
    <kinetics>
        <KM evidence="7">250 uM for GTP</KM>
        <KM evidence="6">340 uM for GTP</KM>
        <KM evidence="6 7">200 uM for GTPgammaS</KM>
        <Vmax evidence="6">75.0 pmol/min/mg enzyme toward GTP</Vmax>
        <Vmax evidence="6">75.0 pmol/min/mg enzyme toward GTPgammaS</Vmax>
        <Vmax evidence="7">6.9 pmol/min/mg enzyme toward GTP</Vmax>
    </kinetics>
</comment>
<comment type="subunit">
    <text evidence="1">Homodimer.</text>
</comment>
<comment type="subcellular location">
    <subcellularLocation>
        <location evidence="12">Membrane</location>
        <topology evidence="12">Multi-pass membrane protein</topology>
    </subcellularLocation>
</comment>
<comment type="developmental stage">
    <text evidence="5">Highly expressed in vegetative cells; expression decreases approximately 3-fold during the aggregation stage, and then increases again during the later stages of development (mound, finger and slug).</text>
</comment>
<comment type="induction">
    <text evidence="5">By cAMP and osmotic shock.</text>
</comment>
<comment type="similarity">
    <text evidence="3">Belongs to the adenylyl cyclase class-4/guanylyl cyclase family.</text>
</comment>
<dbReference type="EC" id="4.6.1.2" evidence="5 6 7"/>
<dbReference type="EMBL" id="AJ238883">
    <property type="protein sequence ID" value="CAB42641.1"/>
    <property type="molecule type" value="mRNA"/>
</dbReference>
<dbReference type="EMBL" id="AAFI02000013">
    <property type="protein sequence ID" value="EAL69785.1"/>
    <property type="molecule type" value="Genomic_DNA"/>
</dbReference>
<dbReference type="RefSeq" id="XP_643824.1">
    <property type="nucleotide sequence ID" value="XM_638732.1"/>
</dbReference>
<dbReference type="SMR" id="Q553Y7"/>
<dbReference type="STRING" id="44689.Q553Y7"/>
<dbReference type="GlyGen" id="Q553Y7">
    <property type="glycosylation" value="1 site"/>
</dbReference>
<dbReference type="PaxDb" id="44689-DDB0191309"/>
<dbReference type="EnsemblProtists" id="EAL69785">
    <property type="protein sequence ID" value="EAL69785"/>
    <property type="gene ID" value="DDB_G0275009"/>
</dbReference>
<dbReference type="GeneID" id="8619871"/>
<dbReference type="KEGG" id="ddi:DDB_G0275009"/>
<dbReference type="dictyBase" id="DDB_G0275009">
    <property type="gene designation" value="gcA"/>
</dbReference>
<dbReference type="VEuPathDB" id="AmoebaDB:DDB_G0275009"/>
<dbReference type="eggNOG" id="KOG1023">
    <property type="taxonomic scope" value="Eukaryota"/>
</dbReference>
<dbReference type="HOGENOM" id="CLU_249557_0_0_1"/>
<dbReference type="InParanoid" id="Q553Y7"/>
<dbReference type="OMA" id="GIKMIHY"/>
<dbReference type="PhylomeDB" id="Q553Y7"/>
<dbReference type="Reactome" id="R-DDI-2514859">
    <property type="pathway name" value="Inactivation, recovery and regulation of the phototransduction cascade"/>
</dbReference>
<dbReference type="SABIO-RK" id="Q553Y7"/>
<dbReference type="PRO" id="PR:Q553Y7"/>
<dbReference type="Proteomes" id="UP000002195">
    <property type="component" value="Chromosome 2"/>
</dbReference>
<dbReference type="GO" id="GO:0031252">
    <property type="term" value="C:cell leading edge"/>
    <property type="evidence" value="ECO:0000314"/>
    <property type="project" value="dictyBase"/>
</dbReference>
<dbReference type="GO" id="GO:0016020">
    <property type="term" value="C:membrane"/>
    <property type="evidence" value="ECO:0000304"/>
    <property type="project" value="dictyBase"/>
</dbReference>
<dbReference type="GO" id="GO:0005886">
    <property type="term" value="C:plasma membrane"/>
    <property type="evidence" value="ECO:0000318"/>
    <property type="project" value="GO_Central"/>
</dbReference>
<dbReference type="GO" id="GO:0005525">
    <property type="term" value="F:GTP binding"/>
    <property type="evidence" value="ECO:0007669"/>
    <property type="project" value="UniProtKB-KW"/>
</dbReference>
<dbReference type="GO" id="GO:0004383">
    <property type="term" value="F:guanylate cyclase activity"/>
    <property type="evidence" value="ECO:0000314"/>
    <property type="project" value="dictyBase"/>
</dbReference>
<dbReference type="GO" id="GO:0046872">
    <property type="term" value="F:metal ion binding"/>
    <property type="evidence" value="ECO:0007669"/>
    <property type="project" value="UniProtKB-KW"/>
</dbReference>
<dbReference type="GO" id="GO:0001653">
    <property type="term" value="F:peptide receptor activity"/>
    <property type="evidence" value="ECO:0000318"/>
    <property type="project" value="GO_Central"/>
</dbReference>
<dbReference type="GO" id="GO:0006182">
    <property type="term" value="P:cGMP biosynthetic process"/>
    <property type="evidence" value="ECO:0000318"/>
    <property type="project" value="GO_Central"/>
</dbReference>
<dbReference type="GO" id="GO:0019934">
    <property type="term" value="P:cGMP-mediated signaling"/>
    <property type="evidence" value="ECO:0000304"/>
    <property type="project" value="dictyBase"/>
</dbReference>
<dbReference type="GO" id="GO:0006935">
    <property type="term" value="P:chemotaxis"/>
    <property type="evidence" value="ECO:0000316"/>
    <property type="project" value="dictyBase"/>
</dbReference>
<dbReference type="GO" id="GO:0120320">
    <property type="term" value="P:lateral pseudopodium retraction"/>
    <property type="evidence" value="ECO:0000316"/>
    <property type="project" value="dictyBase"/>
</dbReference>
<dbReference type="GO" id="GO:0031033">
    <property type="term" value="P:myosin filament organization"/>
    <property type="evidence" value="ECO:0000316"/>
    <property type="project" value="dictyBase"/>
</dbReference>
<dbReference type="GO" id="GO:0031037">
    <property type="term" value="P:myosin II filament disassembly"/>
    <property type="evidence" value="ECO:0000304"/>
    <property type="project" value="dictyBase"/>
</dbReference>
<dbReference type="GO" id="GO:0007168">
    <property type="term" value="P:receptor guanylyl cyclase signaling pathway"/>
    <property type="evidence" value="ECO:0000318"/>
    <property type="project" value="GO_Central"/>
</dbReference>
<dbReference type="GO" id="GO:0050920">
    <property type="term" value="P:regulation of chemotaxis"/>
    <property type="evidence" value="ECO:0000316"/>
    <property type="project" value="dictyBase"/>
</dbReference>
<dbReference type="GO" id="GO:0051602">
    <property type="term" value="P:response to electrical stimulus"/>
    <property type="evidence" value="ECO:0000316"/>
    <property type="project" value="dictyBase"/>
</dbReference>
<dbReference type="CDD" id="cd07302">
    <property type="entry name" value="CHD"/>
    <property type="match status" value="2"/>
</dbReference>
<dbReference type="FunFam" id="3.30.70.1230:FF:000147">
    <property type="entry name" value="Guanylyl cyclase, membrane"/>
    <property type="match status" value="1"/>
</dbReference>
<dbReference type="Gene3D" id="3.30.70.1230">
    <property type="entry name" value="Nucleotide cyclase"/>
    <property type="match status" value="2"/>
</dbReference>
<dbReference type="InterPro" id="IPR001054">
    <property type="entry name" value="A/G_cyclase"/>
</dbReference>
<dbReference type="InterPro" id="IPR050401">
    <property type="entry name" value="Cyclic_nucleotide_synthase"/>
</dbReference>
<dbReference type="InterPro" id="IPR029787">
    <property type="entry name" value="Nucleotide_cyclase"/>
</dbReference>
<dbReference type="PANTHER" id="PTHR11920:SF335">
    <property type="entry name" value="GUANYLATE CYCLASE"/>
    <property type="match status" value="1"/>
</dbReference>
<dbReference type="PANTHER" id="PTHR11920">
    <property type="entry name" value="GUANYLYL CYCLASE"/>
    <property type="match status" value="1"/>
</dbReference>
<dbReference type="Pfam" id="PF00211">
    <property type="entry name" value="Guanylate_cyc"/>
    <property type="match status" value="2"/>
</dbReference>
<dbReference type="SMART" id="SM00044">
    <property type="entry name" value="CYCc"/>
    <property type="match status" value="2"/>
</dbReference>
<dbReference type="SUPFAM" id="SSF55073">
    <property type="entry name" value="Nucleotide cyclase"/>
    <property type="match status" value="2"/>
</dbReference>
<dbReference type="PROSITE" id="PS50125">
    <property type="entry name" value="GUANYLATE_CYCLASE_2"/>
    <property type="match status" value="2"/>
</dbReference>
<reference key="1">
    <citation type="journal article" date="2001" name="Biochem. J.">
        <title>Guanylate cyclase in Dictyostelium discoideum with the topology of mammalian adenylate cyclase.</title>
        <authorList>
            <person name="Roelofs J."/>
            <person name="Snippe H."/>
            <person name="Kleineidam R.G."/>
            <person name="Van Haastert P.J."/>
        </authorList>
    </citation>
    <scope>NUCLEOTIDE SEQUENCE [MRNA]</scope>
    <scope>FUNCTION</scope>
    <scope>CATALYTIC ACTIVITY</scope>
    <scope>DEVELOPMENTAL STAGE</scope>
    <scope>INDUCTION</scope>
    <source>
        <strain>AX3</strain>
    </source>
</reference>
<reference key="2">
    <citation type="journal article" date="2002" name="Nature">
        <title>Sequence and analysis of chromosome 2 of Dictyostelium discoideum.</title>
        <authorList>
            <person name="Gloeckner G."/>
            <person name="Eichinger L."/>
            <person name="Szafranski K."/>
            <person name="Pachebat J.A."/>
            <person name="Bankier A.T."/>
            <person name="Dear P.H."/>
            <person name="Lehmann R."/>
            <person name="Baumgart C."/>
            <person name="Parra G."/>
            <person name="Abril J.F."/>
            <person name="Guigo R."/>
            <person name="Kumpf K."/>
            <person name="Tunggal B."/>
            <person name="Cox E.C."/>
            <person name="Quail M.A."/>
            <person name="Platzer M."/>
            <person name="Rosenthal A."/>
            <person name="Noegel A.A."/>
        </authorList>
    </citation>
    <scope>NUCLEOTIDE SEQUENCE [LARGE SCALE GENOMIC DNA]</scope>
    <source>
        <strain>AX4</strain>
    </source>
</reference>
<reference key="3">
    <citation type="journal article" date="2005" name="Nature">
        <title>The genome of the social amoeba Dictyostelium discoideum.</title>
        <authorList>
            <person name="Eichinger L."/>
            <person name="Pachebat J.A."/>
            <person name="Gloeckner G."/>
            <person name="Rajandream M.A."/>
            <person name="Sucgang R."/>
            <person name="Berriman M."/>
            <person name="Song J."/>
            <person name="Olsen R."/>
            <person name="Szafranski K."/>
            <person name="Xu Q."/>
            <person name="Tunggal B."/>
            <person name="Kummerfeld S."/>
            <person name="Madera M."/>
            <person name="Konfortov B.A."/>
            <person name="Rivero F."/>
            <person name="Bankier A.T."/>
            <person name="Lehmann R."/>
            <person name="Hamlin N."/>
            <person name="Davies R."/>
            <person name="Gaudet P."/>
            <person name="Fey P."/>
            <person name="Pilcher K."/>
            <person name="Chen G."/>
            <person name="Saunders D."/>
            <person name="Sodergren E.J."/>
            <person name="Davis P."/>
            <person name="Kerhornou A."/>
            <person name="Nie X."/>
            <person name="Hall N."/>
            <person name="Anjard C."/>
            <person name="Hemphill L."/>
            <person name="Bason N."/>
            <person name="Farbrother P."/>
            <person name="Desany B."/>
            <person name="Just E."/>
            <person name="Morio T."/>
            <person name="Rost R."/>
            <person name="Churcher C.M."/>
            <person name="Cooper J."/>
            <person name="Haydock S."/>
            <person name="van Driessche N."/>
            <person name="Cronin A."/>
            <person name="Goodhead I."/>
            <person name="Muzny D.M."/>
            <person name="Mourier T."/>
            <person name="Pain A."/>
            <person name="Lu M."/>
            <person name="Harper D."/>
            <person name="Lindsay R."/>
            <person name="Hauser H."/>
            <person name="James K.D."/>
            <person name="Quiles M."/>
            <person name="Madan Babu M."/>
            <person name="Saito T."/>
            <person name="Buchrieser C."/>
            <person name="Wardroper A."/>
            <person name="Felder M."/>
            <person name="Thangavelu M."/>
            <person name="Johnson D."/>
            <person name="Knights A."/>
            <person name="Loulseged H."/>
            <person name="Mungall K.L."/>
            <person name="Oliver K."/>
            <person name="Price C."/>
            <person name="Quail M.A."/>
            <person name="Urushihara H."/>
            <person name="Hernandez J."/>
            <person name="Rabbinowitsch E."/>
            <person name="Steffen D."/>
            <person name="Sanders M."/>
            <person name="Ma J."/>
            <person name="Kohara Y."/>
            <person name="Sharp S."/>
            <person name="Simmonds M.N."/>
            <person name="Spiegler S."/>
            <person name="Tivey A."/>
            <person name="Sugano S."/>
            <person name="White B."/>
            <person name="Walker D."/>
            <person name="Woodward J.R."/>
            <person name="Winckler T."/>
            <person name="Tanaka Y."/>
            <person name="Shaulsky G."/>
            <person name="Schleicher M."/>
            <person name="Weinstock G.M."/>
            <person name="Rosenthal A."/>
            <person name="Cox E.C."/>
            <person name="Chisholm R.L."/>
            <person name="Gibbs R.A."/>
            <person name="Loomis W.F."/>
            <person name="Platzer M."/>
            <person name="Kay R.R."/>
            <person name="Williams J.G."/>
            <person name="Dear P.H."/>
            <person name="Noegel A.A."/>
            <person name="Barrell B.G."/>
            <person name="Kuspa A."/>
        </authorList>
    </citation>
    <scope>NUCLEOTIDE SEQUENCE [LARGE SCALE GENOMIC DNA]</scope>
    <source>
        <strain>AX4</strain>
    </source>
</reference>
<reference key="4">
    <citation type="journal article" date="1989" name="J. Biol. Chem.">
        <title>Regulatory properties of magnesium-dependent guanylate cyclase in Dictyostelium discoideum membranes.</title>
        <authorList>
            <person name="Janssens P.M.W."/>
            <person name="De Jong C.C.C."/>
            <person name="Vink A.A."/>
            <person name="Van Haastert P.J.M."/>
        </authorList>
    </citation>
    <scope>CHARACTERIZATION</scope>
    <scope>SUBCELLULAR LOCATION</scope>
    <source>
        <strain>NC-4</strain>
    </source>
</reference>
<reference key="5">
    <citation type="journal article" date="2001" name="J. Biol. Chem.">
        <title>GTPgammaS regulation of a 12-transmembrane guanylyl cyclase is retained after mutation to an adenylyl cyclase.</title>
        <authorList>
            <person name="Roelofs J."/>
            <person name="Loovers H.M."/>
            <person name="Van Haastert P.J.M."/>
        </authorList>
    </citation>
    <scope>FUNCTION</scope>
    <scope>CATALYTIC ACTIVITY</scope>
    <scope>BIOPHYSICOCHEMICAL PROPERTIES</scope>
    <scope>ACTIVITY REGULATION</scope>
    <scope>MUTAGENESIS OF GLU-440; SER-502 AND HIS-504</scope>
    <source>
        <strain>AX3</strain>
    </source>
</reference>
<reference key="6">
    <citation type="journal article" date="2002" name="J. Biol. Chem.">
        <title>Characterization of two unusual guanylyl cyclases from dictyostelium.</title>
        <authorList>
            <person name="Roelofs J."/>
            <person name="Van Haastert P.J.M."/>
        </authorList>
    </citation>
    <scope>FUNCTION</scope>
    <scope>CATALYTIC ACTIVITY</scope>
    <scope>BIOPHYSICOCHEMICAL PROPERTIES</scope>
    <scope>ACTIVITY REGULATION</scope>
    <scope>COFACTOR</scope>
    <source>
        <strain>AX3</strain>
    </source>
</reference>
<organism>
    <name type="scientific">Dictyostelium discoideum</name>
    <name type="common">Social amoeba</name>
    <dbReference type="NCBI Taxonomy" id="44689"/>
    <lineage>
        <taxon>Eukaryota</taxon>
        <taxon>Amoebozoa</taxon>
        <taxon>Evosea</taxon>
        <taxon>Eumycetozoa</taxon>
        <taxon>Dictyostelia</taxon>
        <taxon>Dictyosteliales</taxon>
        <taxon>Dictyosteliaceae</taxon>
        <taxon>Dictyostelium</taxon>
    </lineage>
</organism>
<protein>
    <recommendedName>
        <fullName evidence="9">Guanylyl cyclase, membrane</fullName>
        <ecNumber evidence="5 6 7">4.6.1.2</ecNumber>
    </recommendedName>
    <alternativeName>
        <fullName evidence="8">DdGCA</fullName>
        <shortName evidence="10">GCA</shortName>
    </alternativeName>
    <alternativeName>
        <fullName evidence="8">Guanylate cyclase</fullName>
    </alternativeName>
</protein>
<proteinExistence type="evidence at protein level"/>
<feature type="chain" id="PRO_0000328216" description="Guanylyl cyclase, membrane">
    <location>
        <begin position="1"/>
        <end position="1483"/>
    </location>
</feature>
<feature type="transmembrane region" description="Helical" evidence="2">
    <location>
        <begin position="50"/>
        <end position="70"/>
    </location>
</feature>
<feature type="transmembrane region" description="Helical" evidence="2">
    <location>
        <begin position="143"/>
        <end position="163"/>
    </location>
</feature>
<feature type="transmembrane region" description="Helical" evidence="2">
    <location>
        <begin position="168"/>
        <end position="188"/>
    </location>
</feature>
<feature type="transmembrane region" description="Helical" evidence="2">
    <location>
        <begin position="198"/>
        <end position="218"/>
    </location>
</feature>
<feature type="transmembrane region" description="Helical" evidence="2">
    <location>
        <begin position="219"/>
        <end position="239"/>
    </location>
</feature>
<feature type="transmembrane region" description="Helical" evidence="2">
    <location>
        <begin position="242"/>
        <end position="262"/>
    </location>
</feature>
<feature type="transmembrane region" description="Helical" evidence="2">
    <location>
        <begin position="907"/>
        <end position="927"/>
    </location>
</feature>
<feature type="transmembrane region" description="Helical" evidence="2">
    <location>
        <begin position="982"/>
        <end position="1002"/>
    </location>
</feature>
<feature type="transmembrane region" description="Helical" evidence="2">
    <location>
        <begin position="1016"/>
        <end position="1036"/>
    </location>
</feature>
<feature type="transmembrane region" description="Helical" evidence="2">
    <location>
        <begin position="1040"/>
        <end position="1060"/>
    </location>
</feature>
<feature type="transmembrane region" description="Helical" evidence="2">
    <location>
        <begin position="1061"/>
        <end position="1081"/>
    </location>
</feature>
<feature type="transmembrane region" description="Helical" evidence="2">
    <location>
        <begin position="1094"/>
        <end position="1114"/>
    </location>
</feature>
<feature type="domain" description="Guanylate cyclase 1" evidence="3">
    <location>
        <begin position="395"/>
        <end position="517"/>
    </location>
</feature>
<feature type="domain" description="Guanylate cyclase 2" evidence="3">
    <location>
        <begin position="1168"/>
        <end position="1296"/>
    </location>
</feature>
<feature type="region of interest" description="Disordered" evidence="4">
    <location>
        <begin position="323"/>
        <end position="376"/>
    </location>
</feature>
<feature type="region of interest" description="Disordered" evidence="4">
    <location>
        <begin position="598"/>
        <end position="619"/>
    </location>
</feature>
<feature type="region of interest" description="Disordered" evidence="4">
    <location>
        <begin position="672"/>
        <end position="838"/>
    </location>
</feature>
<feature type="region of interest" description="Disordered" evidence="4">
    <location>
        <begin position="1348"/>
        <end position="1369"/>
    </location>
</feature>
<feature type="region of interest" description="Disordered" evidence="4">
    <location>
        <begin position="1393"/>
        <end position="1483"/>
    </location>
</feature>
<feature type="compositionally biased region" description="Polar residues" evidence="4">
    <location>
        <begin position="355"/>
        <end position="376"/>
    </location>
</feature>
<feature type="compositionally biased region" description="Polar residues" evidence="4">
    <location>
        <begin position="610"/>
        <end position="619"/>
    </location>
</feature>
<feature type="compositionally biased region" description="Low complexity" evidence="4">
    <location>
        <begin position="672"/>
        <end position="684"/>
    </location>
</feature>
<feature type="compositionally biased region" description="Low complexity" evidence="4">
    <location>
        <begin position="693"/>
        <end position="712"/>
    </location>
</feature>
<feature type="compositionally biased region" description="Low complexity" evidence="4">
    <location>
        <begin position="720"/>
        <end position="765"/>
    </location>
</feature>
<feature type="compositionally biased region" description="Polar residues" evidence="4">
    <location>
        <begin position="772"/>
        <end position="786"/>
    </location>
</feature>
<feature type="compositionally biased region" description="Polar residues" evidence="4">
    <location>
        <begin position="1354"/>
        <end position="1369"/>
    </location>
</feature>
<feature type="compositionally biased region" description="Low complexity" evidence="4">
    <location>
        <begin position="1405"/>
        <end position="1416"/>
    </location>
</feature>
<feature type="compositionally biased region" description="Acidic residues" evidence="4">
    <location>
        <begin position="1432"/>
        <end position="1444"/>
    </location>
</feature>
<feature type="compositionally biased region" description="Low complexity" evidence="4">
    <location>
        <begin position="1446"/>
        <end position="1465"/>
    </location>
</feature>
<feature type="binding site" evidence="3">
    <location>
        <position position="1173"/>
    </location>
    <ligand>
        <name>Mg(2+)</name>
        <dbReference type="ChEBI" id="CHEBI:18420"/>
        <label>1</label>
    </ligand>
</feature>
<feature type="binding site" evidence="3">
    <location>
        <position position="1173"/>
    </location>
    <ligand>
        <name>Mg(2+)</name>
        <dbReference type="ChEBI" id="CHEBI:18420"/>
        <label>2</label>
    </ligand>
</feature>
<feature type="binding site" evidence="3">
    <location>
        <position position="1174"/>
    </location>
    <ligand>
        <name>Mg(2+)</name>
        <dbReference type="ChEBI" id="CHEBI:18420"/>
        <label>2</label>
    </ligand>
</feature>
<feature type="binding site" evidence="3">
    <location>
        <position position="1217"/>
    </location>
    <ligand>
        <name>Mg(2+)</name>
        <dbReference type="ChEBI" id="CHEBI:18420"/>
        <label>1</label>
    </ligand>
</feature>
<feature type="binding site" evidence="3">
    <location>
        <position position="1217"/>
    </location>
    <ligand>
        <name>Mg(2+)</name>
        <dbReference type="ChEBI" id="CHEBI:18420"/>
        <label>2</label>
    </ligand>
</feature>
<feature type="mutagenesis site" description="Catalytic activity preferentially toward ATP instead of GTP, still activated by GTPgammaS; when associated with Q-502 and D-504." evidence="6">
    <original>E</original>
    <variation>K</variation>
    <location>
        <position position="440"/>
    </location>
</feature>
<feature type="mutagenesis site" description="Catalytic activity preferentially toward ATP instead of GTP, still activated by GTPgammaS; when associated with K-440 and D-504." evidence="6">
    <original>S</original>
    <variation>Q</variation>
    <location>
        <position position="502"/>
    </location>
</feature>
<feature type="mutagenesis site" description="Catalytic activity preferentially toward ATP instead of GTP, still activated by GTPgammaS; when associated with K-440 and Q-502." evidence="6">
    <original>H</original>
    <variation>D</variation>
    <location>
        <position position="504"/>
    </location>
</feature>
<feature type="sequence conflict" description="In Ref. 1; CAB42641." evidence="11" ref="1">
    <original>Q</original>
    <variation>P</variation>
    <location>
        <position position="707"/>
    </location>
</feature>
<feature type="sequence conflict" description="In Ref. 1; CAB42641." evidence="11" ref="1">
    <original>N</original>
    <variation>NNNN</variation>
    <location>
        <position position="765"/>
    </location>
</feature>
<feature type="sequence conflict" description="In Ref. 1; CAB42641." evidence="11" ref="1">
    <original>E</original>
    <variation>P</variation>
    <location>
        <position position="868"/>
    </location>
</feature>
<feature type="sequence conflict" description="In Ref. 1; CAB42641." evidence="11" ref="1">
    <original>L</original>
    <variation>S</variation>
    <location>
        <position position="877"/>
    </location>
</feature>
<name>GCA_DICDI</name>
<sequence>MMFGNLPDVRKPKEGYKKYLEYFDLRFPRIQEEKHFQSYYYYTYLKQIRISIIFLTSVLFIGTMTAYISPLDISYLPYYDSKNIYYFNYVQPNVTTTSSSTTTTSSTTNSIDSTVENNNFTEADGHLTNYYFPYLANKARDTFILRMITIGLLLFYFIFTFTAKFKRLWKLFTTITLFLVSCIVLIFESDIRTIPGRMVLLFIIIAISSGMTFLPSMLASGGLCLFFFFYFMFYSQIAGKQMVLLSLVLLISWIILMIISRFKEQLFRDKFRTLENLKIQTIRSEKIINQMLPTVVVQRLRLQSSKDQSLETTLENDKELSIKKDEESNLTGKKQSKVVVSPPPPPTAAAPQQQDNEISTPQNSRKIVDPQSPSSLMPGQYSVTDLIVDSYDPVTVLFCEIVNFNALVEKMSSTQVINLLNEVYNSFDRLTDVYGVTKVEHIGNVYMVVGGCPELCPDHAQRVAHMSLGMLSVIRRFGIVQVRIGMHTGPVVGGIIGKKKLSWHLFGDTINTSSRMASHSSIGRIQVSHPVQQLLRPYFLFEDRGKIQVKGKGLMRTFYLVKTKQLDKRYTSIFSSLHREKPYIPPVDISEVSFENQNNTIGKGDDIASGSATGPTHPNIPNSMLSAIPSRVSIEMNPLGGSGSIQKRERKGSIFANVMPPKVLNFLQTGSLTSPQQQPLPQQSNSEETISNSPRLSSTPQSTSTLQHSSSTGALGSLINNNNNNNNNNNNNNNNNNNNNNNNNNNNNNNNNNNNNNNNNNNNNNLPVSLISPISQNTTPTGSLSLPVTEKKKQTVQFGSISRSSSISKGTVGRSPSPALFDGGIEMDDNGGGAGDDFNTMEPNLDLGKGIHGSNVISTNNSKLNKLEKDLTKHYTLDKFKLSFISRGNLVEKEYRNEYILKNWNRILASMLMIVALFGLSGLVDYFFLKLSSISSIVKVEPMPSSSSSSLSSSSSNSMTSSEEKFITLHTIRSEENLIYDIITGVRYGFVFFCLIVIYVVSKFKTFSIRKWIQEVVMVFFIVLAAVLIVLTSVPPLNKIPLDSVILSIEIMFITICYNFSGIKFWYSNIVCAFCIIFIEISKTWKQAYHSRDIYLSHNYYLITAVLINIITSYFEELFNRLNWVHGRLLDKDQRETESLVAEILPADIVKSMKSGRQLIVDEFKNVTIFLSDIVGFTEMAARMSPRQLVETLNQIYSTFDEIAQEFGVLKIATIGDAYFCVSGCPDKDQTDHAFRVANMAIKMLESIKSIRTVDNIPIRMRIGIHTGPVIAGVVGIKMIHYQLWGESVQITQQMESTSRADMIHVSEDTFNILKSKYLFEERPDGIIKKRKIKTYFLLRALTENDPQPEVKTRSVSVSKSNFGGSLQYNQITPTLNLPVSQLIIKDQNEIKNQNDHDNDDENGNENGNESSSSNINEEEEDDDNSNNNNNNEDDESSYEDDQEMNQYLNNSENNKNNNNNSNQINEEDGNWAKNYDGSSESS</sequence>
<evidence type="ECO:0000250" key="1"/>
<evidence type="ECO:0000255" key="2"/>
<evidence type="ECO:0000255" key="3">
    <source>
        <dbReference type="PROSITE-ProRule" id="PRU00099"/>
    </source>
</evidence>
<evidence type="ECO:0000256" key="4">
    <source>
        <dbReference type="SAM" id="MobiDB-lite"/>
    </source>
</evidence>
<evidence type="ECO:0000269" key="5">
    <source>
    </source>
</evidence>
<evidence type="ECO:0000269" key="6">
    <source>
    </source>
</evidence>
<evidence type="ECO:0000269" key="7">
    <source>
    </source>
</evidence>
<evidence type="ECO:0000303" key="8">
    <source>
    </source>
</evidence>
<evidence type="ECO:0000303" key="9">
    <source>
    </source>
</evidence>
<evidence type="ECO:0000303" key="10">
    <source>
    </source>
</evidence>
<evidence type="ECO:0000305" key="11"/>
<evidence type="ECO:0000305" key="12">
    <source>
    </source>
</evidence>
<accession>Q553Y7</accession>
<accession>Q869Y1</accession>
<accession>Q9XZS0</accession>
<gene>
    <name type="primary">gca</name>
    <name type="ORF">DDB_G0275009</name>
</gene>
<keyword id="KW-0141">cGMP biosynthesis</keyword>
<keyword id="KW-0145">Chemotaxis</keyword>
<keyword id="KW-0342">GTP-binding</keyword>
<keyword id="KW-0456">Lyase</keyword>
<keyword id="KW-0460">Magnesium</keyword>
<keyword id="KW-0472">Membrane</keyword>
<keyword id="KW-0479">Metal-binding</keyword>
<keyword id="KW-0547">Nucleotide-binding</keyword>
<keyword id="KW-1185">Reference proteome</keyword>
<keyword id="KW-0677">Repeat</keyword>
<keyword id="KW-0812">Transmembrane</keyword>
<keyword id="KW-1133">Transmembrane helix</keyword>